<protein>
    <recommendedName>
        <fullName>Centrosomal protein of 131 kDa</fullName>
    </recommendedName>
    <alternativeName>
        <fullName>5-azacytidine-induced protein 1</fullName>
    </alternativeName>
    <alternativeName>
        <fullName>Pre-acrosome localization protein 1</fullName>
    </alternativeName>
</protein>
<keyword id="KW-0025">Alternative splicing</keyword>
<keyword id="KW-0131">Cell cycle</keyword>
<keyword id="KW-0966">Cell projection</keyword>
<keyword id="KW-0970">Cilium biogenesis/degradation</keyword>
<keyword id="KW-0963">Cytoplasm</keyword>
<keyword id="KW-0968">Cytoplasmic vesicle</keyword>
<keyword id="KW-0206">Cytoskeleton</keyword>
<keyword id="KW-0217">Developmental protein</keyword>
<keyword id="KW-0221">Differentiation</keyword>
<keyword id="KW-0597">Phosphoprotein</keyword>
<keyword id="KW-1267">Proteomics identification</keyword>
<keyword id="KW-1185">Reference proteome</keyword>
<keyword id="KW-0744">Spermatogenesis</keyword>
<keyword id="KW-0813">Transport</keyword>
<keyword id="KW-0832">Ubl conjugation</keyword>
<organism>
    <name type="scientific">Homo sapiens</name>
    <name type="common">Human</name>
    <dbReference type="NCBI Taxonomy" id="9606"/>
    <lineage>
        <taxon>Eukaryota</taxon>
        <taxon>Metazoa</taxon>
        <taxon>Chordata</taxon>
        <taxon>Craniata</taxon>
        <taxon>Vertebrata</taxon>
        <taxon>Euteleostomi</taxon>
        <taxon>Mammalia</taxon>
        <taxon>Eutheria</taxon>
        <taxon>Euarchontoglires</taxon>
        <taxon>Primates</taxon>
        <taxon>Haplorrhini</taxon>
        <taxon>Catarrhini</taxon>
        <taxon>Hominidae</taxon>
        <taxon>Homo</taxon>
    </lineage>
</organism>
<gene>
    <name type="primary">CEP131</name>
    <name type="synonym">AZI1</name>
    <name type="synonym">KIAA1118</name>
</gene>
<evidence type="ECO:0000250" key="1"/>
<evidence type="ECO:0000250" key="2">
    <source>
        <dbReference type="UniProtKB" id="Q62036"/>
    </source>
</evidence>
<evidence type="ECO:0000256" key="3">
    <source>
        <dbReference type="SAM" id="MobiDB-lite"/>
    </source>
</evidence>
<evidence type="ECO:0000269" key="4">
    <source>
    </source>
</evidence>
<evidence type="ECO:0000269" key="5">
    <source>
    </source>
</evidence>
<evidence type="ECO:0000269" key="6">
    <source>
    </source>
</evidence>
<evidence type="ECO:0000269" key="7">
    <source>
    </source>
</evidence>
<evidence type="ECO:0000269" key="8">
    <source>
    </source>
</evidence>
<evidence type="ECO:0000269" key="9">
    <source>
    </source>
</evidence>
<evidence type="ECO:0000269" key="10">
    <source>
    </source>
</evidence>
<evidence type="ECO:0000269" key="11">
    <source>
    </source>
</evidence>
<evidence type="ECO:0000269" key="12">
    <source>
    </source>
</evidence>
<evidence type="ECO:0000269" key="13">
    <source>
    </source>
</evidence>
<evidence type="ECO:0000269" key="14">
    <source>
    </source>
</evidence>
<evidence type="ECO:0000269" key="15">
    <source>
    </source>
</evidence>
<evidence type="ECO:0000269" key="16">
    <source>
    </source>
</evidence>
<evidence type="ECO:0000269" key="17">
    <source>
    </source>
</evidence>
<evidence type="ECO:0000269" key="18">
    <source>
    </source>
</evidence>
<evidence type="ECO:0000269" key="19">
    <source>
    </source>
</evidence>
<evidence type="ECO:0000303" key="20">
    <source>
    </source>
</evidence>
<evidence type="ECO:0000305" key="21"/>
<evidence type="ECO:0000305" key="22">
    <source>
    </source>
</evidence>
<evidence type="ECO:0000305" key="23">
    <source>
    </source>
</evidence>
<evidence type="ECO:0007744" key="24">
    <source>
    </source>
</evidence>
<evidence type="ECO:0007744" key="25">
    <source>
    </source>
</evidence>
<evidence type="ECO:0007744" key="26">
    <source>
    </source>
</evidence>
<evidence type="ECO:0007744" key="27">
    <source>
    </source>
</evidence>
<evidence type="ECO:0007744" key="28">
    <source>
    </source>
</evidence>
<evidence type="ECO:0007744" key="29">
    <source>
    </source>
</evidence>
<feature type="chain" id="PRO_0000064781" description="Centrosomal protein of 131 kDa">
    <location>
        <begin position="1"/>
        <end position="1083"/>
    </location>
</feature>
<feature type="domain" description="IQ">
    <location>
        <begin position="269"/>
        <end position="289"/>
    </location>
</feature>
<feature type="region of interest" description="Interaction with PLK4" evidence="18">
    <location>
        <begin position="1"/>
        <end position="250"/>
    </location>
</feature>
<feature type="region of interest" description="Disordered" evidence="3">
    <location>
        <begin position="1"/>
        <end position="155"/>
    </location>
</feature>
<feature type="region of interest" description="Disordered" evidence="3">
    <location>
        <begin position="220"/>
        <end position="258"/>
    </location>
</feature>
<feature type="region of interest" description="Disordered" evidence="3">
    <location>
        <begin position="301"/>
        <end position="429"/>
    </location>
</feature>
<feature type="region of interest" description="Disordered" evidence="3">
    <location>
        <begin position="1047"/>
        <end position="1083"/>
    </location>
</feature>
<feature type="compositionally biased region" description="Polar residues" evidence="3">
    <location>
        <begin position="68"/>
        <end position="87"/>
    </location>
</feature>
<feature type="compositionally biased region" description="Polar residues" evidence="3">
    <location>
        <begin position="138"/>
        <end position="148"/>
    </location>
</feature>
<feature type="compositionally biased region" description="Polar residues" evidence="3">
    <location>
        <begin position="232"/>
        <end position="245"/>
    </location>
</feature>
<feature type="compositionally biased region" description="Basic and acidic residues" evidence="3">
    <location>
        <begin position="317"/>
        <end position="333"/>
    </location>
</feature>
<feature type="compositionally biased region" description="Basic and acidic residues" evidence="3">
    <location>
        <begin position="360"/>
        <end position="369"/>
    </location>
</feature>
<feature type="compositionally biased region" description="Basic and acidic residues" evidence="3">
    <location>
        <begin position="1047"/>
        <end position="1076"/>
    </location>
</feature>
<feature type="modified residue" description="Phosphoserine" evidence="2">
    <location>
        <position position="14"/>
    </location>
</feature>
<feature type="modified residue" description="Phosphoserine" evidence="29">
    <location>
        <position position="35"/>
    </location>
</feature>
<feature type="modified residue" description="Phosphoserine; by MAPKAPK2" evidence="25 27 28 29">
    <location>
        <position position="47"/>
    </location>
</feature>
<feature type="modified residue" description="Phosphoserine; by MAPKAPK2 and PLK4" evidence="18 28">
    <location>
        <position position="78"/>
    </location>
</feature>
<feature type="modified residue" description="Phosphoserine" evidence="27">
    <location>
        <position position="89"/>
    </location>
</feature>
<feature type="modified residue" description="Phosphoserine" evidence="25 27">
    <location>
        <position position="105"/>
    </location>
</feature>
<feature type="modified residue" description="Phosphoserine" evidence="29">
    <location>
        <position position="114"/>
    </location>
</feature>
<feature type="modified residue" description="Phosphoserine" evidence="29">
    <location>
        <position position="146"/>
    </location>
</feature>
<feature type="modified residue" description="Phosphoserine" evidence="24 25">
    <location>
        <position position="150"/>
    </location>
</feature>
<feature type="modified residue" description="Phosphoserine" evidence="29">
    <location>
        <position position="381"/>
    </location>
</feature>
<feature type="modified residue" description="Phosphothreonine" evidence="29">
    <location>
        <position position="383"/>
    </location>
</feature>
<feature type="modified residue" description="Phosphoserine" evidence="28">
    <location>
        <position position="453"/>
    </location>
</feature>
<feature type="modified residue" description="Phosphoserine" evidence="2">
    <location>
        <position position="499"/>
    </location>
</feature>
<feature type="modified residue" description="Phosphoserine" evidence="15">
    <location>
        <position position="731"/>
    </location>
</feature>
<feature type="modified residue" description="Phosphoserine" evidence="27 29">
    <location>
        <position position="798"/>
    </location>
</feature>
<feature type="splice variant" id="VSP_015823" description="In isoform 2 and isoform 3." evidence="20">
    <location>
        <begin position="491"/>
        <end position="493"/>
    </location>
</feature>
<feature type="splice variant" id="VSP_040204" description="In isoform 3." evidence="21">
    <location>
        <begin position="777"/>
        <end position="812"/>
    </location>
</feature>
<feature type="sequence variant" id="VAR_056740" description="In dbSNP:rs8067409.">
    <original>V</original>
    <variation>I</variation>
    <location>
        <position position="43"/>
    </location>
</feature>
<feature type="sequence variant" id="VAR_060226" description="In dbSNP:rs752612451.">
    <original>I</original>
    <variation>V</variation>
    <location>
        <position position="70"/>
    </location>
</feature>
<feature type="sequence variant" id="VAR_060227" description="In dbSNP:rs2466773." evidence="4 6">
    <original>T</original>
    <variation>A</variation>
    <location>
        <position position="272"/>
    </location>
</feature>
<feature type="sequence variant" id="VAR_060228" description="In dbSNP:rs2659015." evidence="4 6">
    <original>T</original>
    <variation>A</variation>
    <location>
        <position position="397"/>
    </location>
</feature>
<feature type="sequence variant" id="VAR_060229" description="In dbSNP:rs2659016." evidence="4 6">
    <original>V</original>
    <variation>A</variation>
    <location>
        <position position="473"/>
    </location>
</feature>
<feature type="mutagenesis site" description="Partially reduces in vitro phosphorylation by MAPKAPK2 and decreases binding to 14-3-3. Abolishes in vitro phosphorylation by MAPKAPK2, interaction with 14-3-3 and stress-induced centriolar satellite remodeling; when associated with A-78." evidence="15">
    <original>S</original>
    <variation>A</variation>
    <location>
        <position position="47"/>
    </location>
</feature>
<feature type="mutagenesis site" description="Partially reduces in vitro phosphorylation by MAPKAPK2 and decreases binding to 14-3-3. Abolishes in vitro phosphorylation by MAPKAPK2, interaction with 14-3-3 and stress-induced centriolar satellite remodeling; when associated with A-47. Loss of PLK4-mediated phosphorylation. No effect on its localization to centriole and centriolar satellite or on its function in ciliogenesis. Cannot rescue centriolar satellite dispersion defect mediated by deletion of CEP131." evidence="15 18">
    <original>S</original>
    <variation>A</variation>
    <location>
        <position position="78"/>
    </location>
</feature>
<feature type="mutagenesis site" description="Phosphomimetic mutant. No effect on its localization to centriole and centriolar satellite or on its function in ciliogenesis. Can rescue centriolar satellite dispersion defect mediated by deletion of CEP131." evidence="18">
    <original>S</original>
    <variation>D</variation>
    <location>
        <position position="78"/>
    </location>
</feature>
<feature type="mutagenesis site" description="No effect on interaction with 14-3-3." evidence="15">
    <original>S</original>
    <variation>A</variation>
    <location>
        <position position="731"/>
    </location>
</feature>
<feature type="modified residue" description="Phosphoserine" evidence="26 27">
    <location sequence="Q9UPN4-2">
        <position position="489"/>
    </location>
</feature>
<feature type="modified residue" description="Phosphoserine" evidence="27">
    <location sequence="Q9UPN4-2">
        <position position="496"/>
    </location>
</feature>
<feature type="modified residue" description="Phosphoserine" evidence="26 27">
    <location sequence="Q9UPN4-3">
        <position position="489"/>
    </location>
</feature>
<feature type="modified residue" description="Phosphoserine" evidence="27">
    <location sequence="Q9UPN4-3">
        <position position="496"/>
    </location>
</feature>
<accession>Q9UPN4</accession>
<accession>A6NHI8</accession>
<accession>B2RN11</accession>
<accession>Q96F50</accession>
<dbReference type="EMBL" id="AB029041">
    <property type="protein sequence ID" value="BAA83070.1"/>
    <property type="status" value="ALT_INIT"/>
    <property type="molecule type" value="mRNA"/>
</dbReference>
<dbReference type="EMBL" id="AC027601">
    <property type="status" value="NOT_ANNOTATED_CDS"/>
    <property type="molecule type" value="Genomic_DNA"/>
</dbReference>
<dbReference type="EMBL" id="BC011615">
    <property type="protein sequence ID" value="AAH11615.2"/>
    <property type="molecule type" value="mRNA"/>
</dbReference>
<dbReference type="EMBL" id="BC136580">
    <property type="protein sequence ID" value="AAI36581.1"/>
    <property type="molecule type" value="mRNA"/>
</dbReference>
<dbReference type="CCDS" id="CCDS32764.1">
    <molecule id="Q9UPN4-3"/>
</dbReference>
<dbReference type="CCDS" id="CCDS45808.1">
    <molecule id="Q9UPN4-2"/>
</dbReference>
<dbReference type="CCDS" id="CCDS82215.1">
    <molecule id="Q9UPN4-1"/>
</dbReference>
<dbReference type="RefSeq" id="NP_001009811.2">
    <molecule id="Q9UPN4-3"/>
    <property type="nucleotide sequence ID" value="NM_001009811.4"/>
</dbReference>
<dbReference type="RefSeq" id="NP_001306157.1">
    <molecule id="Q9UPN4-1"/>
    <property type="nucleotide sequence ID" value="NM_001319228.2"/>
</dbReference>
<dbReference type="RefSeq" id="NP_055799.2">
    <molecule id="Q9UPN4-2"/>
    <property type="nucleotide sequence ID" value="NM_014984.4"/>
</dbReference>
<dbReference type="RefSeq" id="XP_047291612.1">
    <molecule id="Q9UPN4-1"/>
    <property type="nucleotide sequence ID" value="XM_047435656.1"/>
</dbReference>
<dbReference type="RefSeq" id="XP_047291613.1">
    <molecule id="Q9UPN4-2"/>
    <property type="nucleotide sequence ID" value="XM_047435657.1"/>
</dbReference>
<dbReference type="RefSeq" id="XP_047291620.1">
    <molecule id="Q9UPN4-3"/>
    <property type="nucleotide sequence ID" value="XM_047435664.1"/>
</dbReference>
<dbReference type="SMR" id="Q9UPN4"/>
<dbReference type="BioGRID" id="116641">
    <property type="interactions" value="246"/>
</dbReference>
<dbReference type="CORUM" id="Q9UPN4"/>
<dbReference type="DIP" id="DIP-56658N"/>
<dbReference type="FunCoup" id="Q9UPN4">
    <property type="interactions" value="2155"/>
</dbReference>
<dbReference type="IntAct" id="Q9UPN4">
    <property type="interactions" value="161"/>
</dbReference>
<dbReference type="MINT" id="Q9UPN4"/>
<dbReference type="STRING" id="9606.ENSP00000269392"/>
<dbReference type="GlyGen" id="Q9UPN4">
    <property type="glycosylation" value="3 sites, 1 N-linked glycan (1 site), 1 O-linked glycan (1 site)"/>
</dbReference>
<dbReference type="iPTMnet" id="Q9UPN4"/>
<dbReference type="MetOSite" id="Q9UPN4"/>
<dbReference type="PhosphoSitePlus" id="Q9UPN4"/>
<dbReference type="BioMuta" id="CEP131"/>
<dbReference type="DMDM" id="313104247"/>
<dbReference type="jPOST" id="Q9UPN4"/>
<dbReference type="MassIVE" id="Q9UPN4"/>
<dbReference type="PaxDb" id="9606-ENSP00000393583"/>
<dbReference type="PeptideAtlas" id="Q9UPN4"/>
<dbReference type="ProteomicsDB" id="85387">
    <molecule id="Q9UPN4-1"/>
</dbReference>
<dbReference type="ProteomicsDB" id="85388">
    <molecule id="Q9UPN4-2"/>
</dbReference>
<dbReference type="ProteomicsDB" id="85389">
    <molecule id="Q9UPN4-3"/>
</dbReference>
<dbReference type="Pumba" id="Q9UPN4"/>
<dbReference type="Antibodypedia" id="19799">
    <property type="antibodies" value="120 antibodies from 24 providers"/>
</dbReference>
<dbReference type="DNASU" id="22994"/>
<dbReference type="Ensembl" id="ENST00000269392.8">
    <molecule id="Q9UPN4-1"/>
    <property type="protein sequence ID" value="ENSP00000269392.4"/>
    <property type="gene ID" value="ENSG00000141577.14"/>
</dbReference>
<dbReference type="Ensembl" id="ENST00000374782.7">
    <molecule id="Q9UPN4-3"/>
    <property type="protein sequence ID" value="ENSP00000363914.3"/>
    <property type="gene ID" value="ENSG00000141577.14"/>
</dbReference>
<dbReference type="Ensembl" id="ENST00000450824.7">
    <molecule id="Q9UPN4-2"/>
    <property type="protein sequence ID" value="ENSP00000393583.2"/>
    <property type="gene ID" value="ENSG00000141577.14"/>
</dbReference>
<dbReference type="GeneID" id="22994"/>
<dbReference type="KEGG" id="hsa:22994"/>
<dbReference type="MANE-Select" id="ENST00000450824.7">
    <molecule id="Q9UPN4-2"/>
    <property type="protein sequence ID" value="ENSP00000393583.2"/>
    <property type="RefSeq nucleotide sequence ID" value="NM_014984.4"/>
    <property type="RefSeq protein sequence ID" value="NP_055799.2"/>
</dbReference>
<dbReference type="UCSC" id="uc002jzn.2">
    <molecule id="Q9UPN4-1"/>
    <property type="organism name" value="human"/>
</dbReference>
<dbReference type="AGR" id="HGNC:29511"/>
<dbReference type="CTD" id="22994"/>
<dbReference type="DisGeNET" id="22994"/>
<dbReference type="GeneCards" id="CEP131"/>
<dbReference type="HGNC" id="HGNC:29511">
    <property type="gene designation" value="CEP131"/>
</dbReference>
<dbReference type="HPA" id="ENSG00000141577">
    <property type="expression patterns" value="Low tissue specificity"/>
</dbReference>
<dbReference type="MIM" id="613479">
    <property type="type" value="gene"/>
</dbReference>
<dbReference type="neXtProt" id="NX_Q9UPN4"/>
<dbReference type="OpenTargets" id="ENSG00000141577"/>
<dbReference type="PharmGKB" id="PA128394595"/>
<dbReference type="PharmGKB" id="PA134920867"/>
<dbReference type="VEuPathDB" id="HostDB:ENSG00000141577"/>
<dbReference type="eggNOG" id="ENOG502RZME">
    <property type="taxonomic scope" value="Eukaryota"/>
</dbReference>
<dbReference type="GeneTree" id="ENSGT00390000001758"/>
<dbReference type="HOGENOM" id="CLU_010690_0_0_1"/>
<dbReference type="InParanoid" id="Q9UPN4"/>
<dbReference type="OMA" id="RKECTLA"/>
<dbReference type="OrthoDB" id="197735at2759"/>
<dbReference type="PAN-GO" id="Q9UPN4">
    <property type="GO annotations" value="3 GO annotations based on evolutionary models"/>
</dbReference>
<dbReference type="PhylomeDB" id="Q9UPN4"/>
<dbReference type="TreeFam" id="TF328914"/>
<dbReference type="PathwayCommons" id="Q9UPN4"/>
<dbReference type="Reactome" id="R-HSA-2565942">
    <property type="pathway name" value="Regulation of PLK1 Activity at G2/M Transition"/>
</dbReference>
<dbReference type="Reactome" id="R-HSA-380259">
    <property type="pathway name" value="Loss of Nlp from mitotic centrosomes"/>
</dbReference>
<dbReference type="Reactome" id="R-HSA-380270">
    <property type="pathway name" value="Recruitment of mitotic centrosome proteins and complexes"/>
</dbReference>
<dbReference type="Reactome" id="R-HSA-380284">
    <property type="pathway name" value="Loss of proteins required for interphase microtubule organization from the centrosome"/>
</dbReference>
<dbReference type="Reactome" id="R-HSA-380320">
    <property type="pathway name" value="Recruitment of NuMA to mitotic centrosomes"/>
</dbReference>
<dbReference type="Reactome" id="R-HSA-5620912">
    <property type="pathway name" value="Anchoring of the basal body to the plasma membrane"/>
</dbReference>
<dbReference type="Reactome" id="R-HSA-8854518">
    <property type="pathway name" value="AURKA Activation by TPX2"/>
</dbReference>
<dbReference type="SignaLink" id="Q9UPN4"/>
<dbReference type="SIGNOR" id="Q9UPN4"/>
<dbReference type="BioGRID-ORCS" id="22994">
    <property type="hits" value="352 hits in 1146 CRISPR screens"/>
</dbReference>
<dbReference type="CD-CODE" id="8C2F96ED">
    <property type="entry name" value="Centrosome"/>
</dbReference>
<dbReference type="ChiTaRS" id="CEP131">
    <property type="organism name" value="human"/>
</dbReference>
<dbReference type="GeneWiki" id="AZI1"/>
<dbReference type="GenomeRNAi" id="22994"/>
<dbReference type="Pharos" id="Q9UPN4">
    <property type="development level" value="Tbio"/>
</dbReference>
<dbReference type="PRO" id="PR:Q9UPN4"/>
<dbReference type="Proteomes" id="UP000005640">
    <property type="component" value="Chromosome 17"/>
</dbReference>
<dbReference type="RNAct" id="Q9UPN4">
    <property type="molecule type" value="protein"/>
</dbReference>
<dbReference type="Bgee" id="ENSG00000141577">
    <property type="expression patterns" value="Expressed in sural nerve and 97 other cell types or tissues"/>
</dbReference>
<dbReference type="ExpressionAtlas" id="Q9UPN4">
    <property type="expression patterns" value="baseline and differential"/>
</dbReference>
<dbReference type="GO" id="GO:0001669">
    <property type="term" value="C:acrosomal vesicle"/>
    <property type="evidence" value="ECO:0007669"/>
    <property type="project" value="UniProtKB-SubCell"/>
</dbReference>
<dbReference type="GO" id="GO:0034451">
    <property type="term" value="C:centriolar satellite"/>
    <property type="evidence" value="ECO:0000314"/>
    <property type="project" value="HPA"/>
</dbReference>
<dbReference type="GO" id="GO:0005814">
    <property type="term" value="C:centriole"/>
    <property type="evidence" value="ECO:0007669"/>
    <property type="project" value="UniProtKB-SubCell"/>
</dbReference>
<dbReference type="GO" id="GO:0005813">
    <property type="term" value="C:centrosome"/>
    <property type="evidence" value="ECO:0000314"/>
    <property type="project" value="UniProtKB"/>
</dbReference>
<dbReference type="GO" id="GO:0036064">
    <property type="term" value="C:ciliary basal body"/>
    <property type="evidence" value="ECO:0000314"/>
    <property type="project" value="HPA"/>
</dbReference>
<dbReference type="GO" id="GO:0035869">
    <property type="term" value="C:ciliary transition zone"/>
    <property type="evidence" value="ECO:0000314"/>
    <property type="project" value="GO_Central"/>
</dbReference>
<dbReference type="GO" id="GO:0005929">
    <property type="term" value="C:cilium"/>
    <property type="evidence" value="ECO:0000314"/>
    <property type="project" value="HPA"/>
</dbReference>
<dbReference type="GO" id="GO:0005829">
    <property type="term" value="C:cytosol"/>
    <property type="evidence" value="ECO:0000304"/>
    <property type="project" value="Reactome"/>
</dbReference>
<dbReference type="GO" id="GO:0045171">
    <property type="term" value="C:intercellular bridge"/>
    <property type="evidence" value="ECO:0000314"/>
    <property type="project" value="HPA"/>
</dbReference>
<dbReference type="GO" id="GO:0043231">
    <property type="term" value="C:intracellular membrane-bounded organelle"/>
    <property type="evidence" value="ECO:0000314"/>
    <property type="project" value="HPA"/>
</dbReference>
<dbReference type="GO" id="GO:0002177">
    <property type="term" value="C:manchette"/>
    <property type="evidence" value="ECO:0007669"/>
    <property type="project" value="GOC"/>
</dbReference>
<dbReference type="GO" id="GO:0015630">
    <property type="term" value="C:microtubule cytoskeleton"/>
    <property type="evidence" value="ECO:0000314"/>
    <property type="project" value="HPA"/>
</dbReference>
<dbReference type="GO" id="GO:0120212">
    <property type="term" value="C:sperm head-tail coupling apparatus"/>
    <property type="evidence" value="ECO:0007669"/>
    <property type="project" value="Ensembl"/>
</dbReference>
<dbReference type="GO" id="GO:0042803">
    <property type="term" value="F:protein homodimerization activity"/>
    <property type="evidence" value="ECO:0000314"/>
    <property type="project" value="UniProtKB"/>
</dbReference>
<dbReference type="GO" id="GO:0044877">
    <property type="term" value="F:protein-containing complex binding"/>
    <property type="evidence" value="ECO:0000314"/>
    <property type="project" value="UniProtKB"/>
</dbReference>
<dbReference type="GO" id="GO:0060271">
    <property type="term" value="P:cilium assembly"/>
    <property type="evidence" value="ECO:0000318"/>
    <property type="project" value="GO_Central"/>
</dbReference>
<dbReference type="GO" id="GO:0035735">
    <property type="term" value="P:intraciliary transport involved in cilium assembly"/>
    <property type="evidence" value="ECO:0000315"/>
    <property type="project" value="UniProtKB"/>
</dbReference>
<dbReference type="GO" id="GO:1990953">
    <property type="term" value="P:intramanchette transport"/>
    <property type="evidence" value="ECO:0007669"/>
    <property type="project" value="Ensembl"/>
</dbReference>
<dbReference type="GO" id="GO:1905198">
    <property type="term" value="P:manchette assembly"/>
    <property type="evidence" value="ECO:0007669"/>
    <property type="project" value="Ensembl"/>
</dbReference>
<dbReference type="GO" id="GO:1905515">
    <property type="term" value="P:non-motile cilium assembly"/>
    <property type="evidence" value="ECO:0007669"/>
    <property type="project" value="Ensembl"/>
</dbReference>
<dbReference type="GO" id="GO:0008284">
    <property type="term" value="P:positive regulation of cell population proliferation"/>
    <property type="evidence" value="ECO:0000315"/>
    <property type="project" value="UniProtKB"/>
</dbReference>
<dbReference type="GO" id="GO:0090316">
    <property type="term" value="P:positive regulation of intracellular protein transport"/>
    <property type="evidence" value="ECO:0000315"/>
    <property type="project" value="UniProtKB"/>
</dbReference>
<dbReference type="GO" id="GO:0071539">
    <property type="term" value="P:protein localization to centrosome"/>
    <property type="evidence" value="ECO:0000315"/>
    <property type="project" value="UniProtKB"/>
</dbReference>
<dbReference type="GO" id="GO:0010824">
    <property type="term" value="P:regulation of centrosome duplication"/>
    <property type="evidence" value="ECO:0000315"/>
    <property type="project" value="UniProtKB"/>
</dbReference>
<dbReference type="GO" id="GO:0007288">
    <property type="term" value="P:sperm axoneme assembly"/>
    <property type="evidence" value="ECO:0007669"/>
    <property type="project" value="Ensembl"/>
</dbReference>
<dbReference type="InterPro" id="IPR030465">
    <property type="entry name" value="CEP131"/>
</dbReference>
<dbReference type="PANTHER" id="PTHR31540">
    <property type="entry name" value="CENTROSOMAL PROTEIN OF 131 KDA"/>
    <property type="match status" value="1"/>
</dbReference>
<dbReference type="PANTHER" id="PTHR31540:SF1">
    <property type="entry name" value="CENTROSOMAL PROTEIN OF 131 KDA"/>
    <property type="match status" value="1"/>
</dbReference>
<sequence>MKGTRAIGSVPERSPAGVDLSLTGLPPPVSRRPGSAATTKPIVRSVSVVTGSEQKRKVLEATGPGGSQAINNLRRSNSTTQVSQPRSGSPRPTEPTDFLMLFEGSPSGKKRPASLSTAPSEKGATWNVLDDQPRGFTLPSNARSSSALDSPAGPRRKECTVALAPNFTANNRSNKGAVGNCVTTMVHNRYTPSERAPPLKSSNQTAPSLNNIIKAATCEGSESSGFGKLPKNVSSATHSARNNTGGSTGLPRRKEVTEEEAERFIHQVNQATVTIQRWYRHQVQRRGAGAARLEHLLQAKREEQRQRSGEGTLLDLHQQKEAARRKAREEKARQARRAAIQELQQKRALRAQKASTAERGPPENPRETRVPGMRQPAQELSPTPGGTAHQALKANNTGGGLPAAGPGDRCLPTSDSSPEPQQPPEDRTQDVLAQDAAGDNLEMMAPSRGSAKSRGPLEELLHTLQLLEKEPDVLPRPRTHHRGRYAWASEVTTEDDASSLTADNLEKFGKLSAFPEPPEDGTLLSEAKLQSIMSFLDEMEKSGQDQLDSQQEGWVPEAGPGPLELGSEVSTSVMRLKLEVEEKKQAMLLLQRALAQQRDLTARRVKETEKALSRQLQRQREHYEATIQRHLAFIDQLIEDKKVLSEKCEAVVAELKQEDQRCTERVAQAQAQHELEIKKLKELMSATEKARREKWISEKTKKIKEVTVRGLEPEIQKLIARHKQEVRRLKSLHEAELLQSDERASQRCLRQAEELREQLEREKEALGQQERERARQRFQQHLEQEQWALQQQRQRLYSEVAEERERLGQQAARQRAELEELRQQLEESSSALTRALRAEFEKGREEQERRHQMELNTLKQQLELERQAWEAGRTRKEEAWLLNREQELREEIRKGRDKEIELVIHRLEADMALAKEESEKAAESRIKRLRDKYEAELSELEQSERKLQERCSELKGQLGEAEGENLRLQGLVRQKERALEDAQAVNEQLSSERSNLAQVIRQEFEDRLAASEEETRQAKAELATLQARQQLELEEVHRRVKTALARKEEAVSSLRTQHEAAVKRADHLEELLEQHRRPTPSTK</sequence>
<comment type="function">
    <text evidence="2 7 8 11 12 13 14 15 18">Component of centriolar satellites contributing to the building of a complex and dynamic network required to regulate cilia/flagellum formation (PubMed:17954613, PubMed:24185901). In proliferating cells, MIB1-mediated ubiquitination induces its sequestration within centriolar satellites, precluding untimely cilia formation initiation (PubMed:24121310). In contrast, during normal and ultraviolet or heat shock cellular stress-induced ciliogenesis, its non-ubiquitinated form is rapidly displaced from centriolar satellites and recruited to centrosome/basal bodies in a microtubule- and p38 MAPK-dependent manner (PubMed:24121310, PubMed:26616734). Also acts as a negative regulator of BBSome ciliary trafficking (PubMed:24550735). Plays a role in sperm flagellar formation; may be involved in the regulation of intraflagellar transport (IFT) and/or intramanchette (IMT) trafficking, which are important for axoneme extension and/or cargo delivery to the nascent sperm tail (By similarity). Required for optimal cell proliferation and cell cycle progression; may play a role in the regulation of genome stability in non-ciliogenic cells (PubMed:22797915, PubMed:26297806). Involved in centriole duplication (By similarity). Required for CEP152, WDR62 and CEP63 centrosomal localization and promotes the centrosomal localization of CDK2 (PubMed:26297806). Essential for maintaining proper centriolar satellite integrity (PubMed:30804208).</text>
</comment>
<comment type="subunit">
    <text evidence="8 10 11 13 14 15 16 18 19">Self-associates. Associates with the centriolar satellite BBSome protein complex. Interacts with BBS4; the interaction limits BBS4 availability for association with the BBSome complex, and hence negatively regulates ciliary localization of the BBSome complex (PubMed:24550735). Interacts with MIB1 (PubMed:24121310). Interacts with PCM1; the interaction increases in response to ultraviolet light (UV) radiation (PubMed:22797915, PubMed:24121310). Associates with microtubules; association with microtubules is reduced in response to cellular stress, such as UV stimulation, in a process that requires p38 MAP kinase signaling (PubMed:24121310). Interacts with CEP290, DCTN1, PCNT, PCM1 and CEP152. Interacts with 14-3-3 proteins following UV-induced phosphorylation by MAPKAPK2; this inhibits formation of novel centriolar satellites (PubMed:26616734). Interacts with SDCCAG8 (PubMed:27224062). Interacts with CCDC61 (PubMed:31789463). Interacts with PLK4 (PubMed:30804208).</text>
</comment>
<comment type="interaction">
    <interactant intactId="EBI-2558372">
        <id>Q9UPN4</id>
    </interactant>
    <interactant intactId="EBI-311012">
        <id>O94986</id>
        <label>CEP152</label>
    </interactant>
    <organismsDiffer>false</organismsDiffer>
    <experiments>3</experiments>
</comment>
<comment type="interaction">
    <interactant intactId="EBI-2558372">
        <id>Q9UPN4</id>
    </interactant>
    <interactant intactId="EBI-1811944">
        <id>O15078</id>
        <label>CEP290</label>
    </interactant>
    <organismsDiffer>false</organismsDiffer>
    <experiments>9</experiments>
</comment>
<comment type="interaction">
    <interactant intactId="EBI-2558372">
        <id>Q9UPN4</id>
    </interactant>
    <interactant intactId="EBI-741421">
        <id>Q15154</id>
        <label>PCM1</label>
    </interactant>
    <organismsDiffer>false</organismsDiffer>
    <experiments>6</experiments>
</comment>
<comment type="interaction">
    <interactant intactId="EBI-2558372">
        <id>Q9UPN4</id>
    </interactant>
    <interactant intactId="EBI-1047850">
        <id>Q86SQ7</id>
        <label>SDCCAG8</label>
    </interactant>
    <organismsDiffer>false</organismsDiffer>
    <experiments>3</experiments>
</comment>
<comment type="subcellular location">
    <subcellularLocation>
        <location evidence="5 16 17 18">Cytoplasm</location>
        <location evidence="5 16 17 18">Cytoskeleton</location>
        <location evidence="5 16 17 18">Microtubule organizing center</location>
        <location evidence="5 16 17 18">Centrosome</location>
    </subcellularLocation>
    <subcellularLocation>
        <location evidence="14 15 18 19">Cytoplasm</location>
        <location evidence="14 15 18 19">Cytoskeleton</location>
        <location evidence="14 15 18 19">Microtubule organizing center</location>
        <location evidence="14 15 18 19">Centrosome</location>
        <location evidence="14 15 18 19">Centriolar satellite</location>
    </subcellularLocation>
    <subcellularLocation>
        <location evidence="18">Cytoplasm</location>
        <location evidence="18">Cytoskeleton</location>
        <location evidence="18">Microtubule organizing center</location>
        <location evidence="18">Centrosome</location>
        <location evidence="18">Centriole</location>
    </subcellularLocation>
    <subcellularLocation>
        <location>Cytoplasm</location>
        <location>Cytoskeleton</location>
        <location>Cilium basal body</location>
    </subcellularLocation>
    <subcellularLocation>
        <location evidence="2">Cytoplasmic vesicle</location>
        <location evidence="2">Secretory vesicle</location>
        <location evidence="2">Acrosome</location>
    </subcellularLocation>
    <text evidence="1 15">Colocalized with pericentriolar material protein PCM1 at centriolar satellites. During spermiogenesis, becomes enriched with nephrocystin NPHP1 at the transition zone, a structure at the base of the ciliary axoneme important for regulating traffic into the ciliary compartment. Traffics towards and away from the centrosome/basal body and the transition zone of the ciliary axoneme in a microtubule-dependent manner. Localized at the Golgi-derived acrosome and the centrosome-containing head-tail coupling apparatus (HTCA) (By similarity). Ubiquitinated form is sequestered and colocalized with BBS4, CEP290, PCM1 and PCNT at centriolar satellites in proliferating cells. Colocalized with the pericentriolar material protein PCM1 at centrosome. Traffics towards and away from centriolar satellites and centrosome in a microtubule- and dynein-dependent manner in interphase cells. Displaced from centriolar satellites but still remains associated with the centrosome in response to cellular stress, such as ultraviolet light (UV) radiation or heat shock, in a process that requires p38 MAPK signaling (PubMed:26616734).</text>
</comment>
<comment type="alternative products">
    <event type="alternative splicing"/>
    <isoform>
        <id>Q9UPN4-1</id>
        <name>1</name>
        <sequence type="displayed"/>
    </isoform>
    <isoform>
        <id>Q9UPN4-2</id>
        <name>2</name>
        <sequence type="described" ref="VSP_015823"/>
    </isoform>
    <isoform>
        <id>Q9UPN4-3</id>
        <name>3</name>
        <sequence type="described" ref="VSP_015823 VSP_040204"/>
    </isoform>
</comment>
<comment type="induction">
    <text evidence="9">Up-regulated by the transcription factor SP1.</text>
</comment>
<comment type="PTM">
    <text evidence="11">Ubiquitinated. Undergoes monoubiquitination catalyzed by the E3 ubiquitin-protein ligase MIB1 in proliferating cells, preventing cilia formation. Monoubiquitination by MIB1 is inhibited in response to cellular stress, such as ultraviolet light (UV) radiation or heat shock, resulting in cilia formation initiation.</text>
</comment>
<comment type="PTM">
    <text evidence="15 18">MAPKAPK2-dependent phosphorylation at Ser-47 and Ser-78 occurs in response to cellular stress such as exposure to ultraviolet irradiation and promotes binding to 14-3-3 proteins which leads to cytoplasmic sequestration of CEP131 and blocks formation of new centriolar satellites (PubMed:26616734). Phosphorylation at Ser-78 mediated by PLK4 is essential for proper organization and integrity of centriolar satellites but is dispensable for its localization to centrioles and its function in ciliogenesis (PubMed:30804208).</text>
</comment>
<comment type="miscellaneous">
    <text evidence="22 23">Transient cell cultured-based knock-down (by RNAi) of CEP131 leads to a reduction in ciliogenesis (PubMed:17954613, PubMed:24121310). However, analysis of mice with chronic absence of CEP131 following genetic deletion (knockout) shows that cilia develop and function normally in vivo. This suggests that CEP131 is not essential for ciliogenesis, except for the modified cilia of the developing sperm flagella, and that there is an alternative mechanism to compensate for the lack of CEP131.</text>
</comment>
<comment type="similarity">
    <text evidence="21">Belongs to the CEP131 family.</text>
</comment>
<comment type="sequence caution" evidence="21">
    <conflict type="erroneous initiation">
        <sequence resource="EMBL-CDS" id="BAA83070"/>
    </conflict>
    <text>Extended N-terminus.</text>
</comment>
<name>CP131_HUMAN</name>
<proteinExistence type="evidence at protein level"/>
<reference key="1">
    <citation type="journal article" date="1999" name="DNA Res.">
        <title>Prediction of the coding sequences of unidentified human genes. XIV. The complete sequences of 100 new cDNA clones from brain which code for large proteins in vitro.</title>
        <authorList>
            <person name="Kikuno R."/>
            <person name="Nagase T."/>
            <person name="Ishikawa K."/>
            <person name="Hirosawa M."/>
            <person name="Miyajima N."/>
            <person name="Tanaka A."/>
            <person name="Kotani H."/>
            <person name="Nomura N."/>
            <person name="Ohara O."/>
        </authorList>
    </citation>
    <scope>NUCLEOTIDE SEQUENCE [LARGE SCALE MRNA] (ISOFORM 1)</scope>
    <scope>VARIANTS ALA-272; ALA-397 AND ALA-473</scope>
    <source>
        <tissue>Brain</tissue>
    </source>
</reference>
<reference key="2">
    <citation type="journal article" date="2006" name="Nature">
        <title>DNA sequence of human chromosome 17 and analysis of rearrangement in the human lineage.</title>
        <authorList>
            <person name="Zody M.C."/>
            <person name="Garber M."/>
            <person name="Adams D.J."/>
            <person name="Sharpe T."/>
            <person name="Harrow J."/>
            <person name="Lupski J.R."/>
            <person name="Nicholson C."/>
            <person name="Searle S.M."/>
            <person name="Wilming L."/>
            <person name="Young S.K."/>
            <person name="Abouelleil A."/>
            <person name="Allen N.R."/>
            <person name="Bi W."/>
            <person name="Bloom T."/>
            <person name="Borowsky M.L."/>
            <person name="Bugalter B.E."/>
            <person name="Butler J."/>
            <person name="Chang J.L."/>
            <person name="Chen C.-K."/>
            <person name="Cook A."/>
            <person name="Corum B."/>
            <person name="Cuomo C.A."/>
            <person name="de Jong P.J."/>
            <person name="DeCaprio D."/>
            <person name="Dewar K."/>
            <person name="FitzGerald M."/>
            <person name="Gilbert J."/>
            <person name="Gibson R."/>
            <person name="Gnerre S."/>
            <person name="Goldstein S."/>
            <person name="Grafham D.V."/>
            <person name="Grocock R."/>
            <person name="Hafez N."/>
            <person name="Hagopian D.S."/>
            <person name="Hart E."/>
            <person name="Norman C.H."/>
            <person name="Humphray S."/>
            <person name="Jaffe D.B."/>
            <person name="Jones M."/>
            <person name="Kamal M."/>
            <person name="Khodiyar V.K."/>
            <person name="LaButti K."/>
            <person name="Laird G."/>
            <person name="Lehoczky J."/>
            <person name="Liu X."/>
            <person name="Lokyitsang T."/>
            <person name="Loveland J."/>
            <person name="Lui A."/>
            <person name="Macdonald P."/>
            <person name="Major J.E."/>
            <person name="Matthews L."/>
            <person name="Mauceli E."/>
            <person name="McCarroll S.A."/>
            <person name="Mihalev A.H."/>
            <person name="Mudge J."/>
            <person name="Nguyen C."/>
            <person name="Nicol R."/>
            <person name="O'Leary S.B."/>
            <person name="Osoegawa K."/>
            <person name="Schwartz D.C."/>
            <person name="Shaw-Smith C."/>
            <person name="Stankiewicz P."/>
            <person name="Steward C."/>
            <person name="Swarbreck D."/>
            <person name="Venkataraman V."/>
            <person name="Whittaker C.A."/>
            <person name="Yang X."/>
            <person name="Zimmer A.R."/>
            <person name="Bradley A."/>
            <person name="Hubbard T."/>
            <person name="Birren B.W."/>
            <person name="Rogers J."/>
            <person name="Lander E.S."/>
            <person name="Nusbaum C."/>
        </authorList>
    </citation>
    <scope>NUCLEOTIDE SEQUENCE [LARGE SCALE GENOMIC DNA]</scope>
</reference>
<reference key="3">
    <citation type="journal article" date="2004" name="Genome Res.">
        <title>The status, quality, and expansion of the NIH full-length cDNA project: the Mammalian Gene Collection (MGC).</title>
        <authorList>
            <consortium name="The MGC Project Team"/>
        </authorList>
    </citation>
    <scope>NUCLEOTIDE SEQUENCE [LARGE SCALE MRNA] (ISOFORM 2)</scope>
    <scope>VARIANTS ALA-272; ALA-397 AND ALA-473</scope>
    <source>
        <tissue>Lung</tissue>
    </source>
</reference>
<reference key="4">
    <citation type="journal article" date="2003" name="Nature">
        <title>Proteomic characterization of the human centrosome by protein correlation profiling.</title>
        <authorList>
            <person name="Andersen J.S."/>
            <person name="Wilkinson C.J."/>
            <person name="Mayor T."/>
            <person name="Mortensen P."/>
            <person name="Nigg E.A."/>
            <person name="Mann M."/>
        </authorList>
    </citation>
    <scope>IDENTIFICATION BY MASS SPECTROMETRY</scope>
    <scope>SUBCELLULAR LOCATION [LARGE SCALE ANALYSIS]</scope>
    <source>
        <tissue>Lymphoblast</tissue>
    </source>
</reference>
<reference key="5">
    <citation type="journal article" date="2006" name="Cell">
        <title>Global, in vivo, and site-specific phosphorylation dynamics in signaling networks.</title>
        <authorList>
            <person name="Olsen J.V."/>
            <person name="Blagoev B."/>
            <person name="Gnad F."/>
            <person name="Macek B."/>
            <person name="Kumar C."/>
            <person name="Mortensen P."/>
            <person name="Mann M."/>
        </authorList>
    </citation>
    <scope>IDENTIFICATION BY MASS SPECTROMETRY [LARGE SCALE ANALYSIS]</scope>
    <source>
        <tissue>Cervix carcinoma</tissue>
    </source>
</reference>
<reference key="6">
    <citation type="journal article" date="2006" name="Nat. Biotechnol.">
        <title>A probability-based approach for high-throughput protein phosphorylation analysis and site localization.</title>
        <authorList>
            <person name="Beausoleil S.A."/>
            <person name="Villen J."/>
            <person name="Gerber S.A."/>
            <person name="Rush J."/>
            <person name="Gygi S.P."/>
        </authorList>
    </citation>
    <scope>PHOSPHORYLATION [LARGE SCALE ANALYSIS] AT SER-150</scope>
    <scope>IDENTIFICATION BY MASS SPECTROMETRY [LARGE SCALE ANALYSIS]</scope>
    <source>
        <tissue>Cervix carcinoma</tissue>
    </source>
</reference>
<reference key="7">
    <citation type="journal article" date="2007" name="J. Cell Biol.">
        <title>Cep164, a novel centriole appendage protein required for primary cilium formation.</title>
        <authorList>
            <person name="Graser S."/>
            <person name="Stierhof Y.-D."/>
            <person name="Lavoie S.B."/>
            <person name="Gassner O.S."/>
            <person name="Lamla S."/>
            <person name="Le Clech M."/>
            <person name="Nigg E.A."/>
        </authorList>
    </citation>
    <scope>FUNCTION IN CILIOGENESIS</scope>
</reference>
<reference key="8">
    <citation type="journal article" date="2008" name="Proc. Natl. Acad. Sci. U.S.A.">
        <title>A quantitative atlas of mitotic phosphorylation.</title>
        <authorList>
            <person name="Dephoure N."/>
            <person name="Zhou C."/>
            <person name="Villen J."/>
            <person name="Beausoleil S.A."/>
            <person name="Bakalarski C.E."/>
            <person name="Elledge S.J."/>
            <person name="Gygi S.P."/>
        </authorList>
    </citation>
    <scope>PHOSPHORYLATION [LARGE SCALE ANALYSIS] AT SER-47; SER-105 AND SER-150</scope>
    <scope>IDENTIFICATION BY MASS SPECTROMETRY [LARGE SCALE ANALYSIS]</scope>
    <source>
        <tissue>Cervix carcinoma</tissue>
    </source>
</reference>
<reference key="9">
    <citation type="journal article" date="2009" name="Mol. Cell. Proteomics">
        <title>Large-scale proteomics analysis of the human kinome.</title>
        <authorList>
            <person name="Oppermann F.S."/>
            <person name="Gnad F."/>
            <person name="Olsen J.V."/>
            <person name="Hornberger R."/>
            <person name="Greff Z."/>
            <person name="Keri G."/>
            <person name="Mann M."/>
            <person name="Daub H."/>
        </authorList>
    </citation>
    <scope>PHOSPHORYLATION [LARGE SCALE ANALYSIS] AT SER-489 (ISOFORMS 2 AND 3)</scope>
    <scope>IDENTIFICATION BY MASS SPECTROMETRY [LARGE SCALE ANALYSIS]</scope>
</reference>
<reference key="10">
    <citation type="journal article" date="2009" name="Sci. Signal.">
        <title>Quantitative phosphoproteomic analysis of T cell receptor signaling reveals system-wide modulation of protein-protein interactions.</title>
        <authorList>
            <person name="Mayya V."/>
            <person name="Lundgren D.H."/>
            <person name="Hwang S.-I."/>
            <person name="Rezaul K."/>
            <person name="Wu L."/>
            <person name="Eng J.K."/>
            <person name="Rodionov V."/>
            <person name="Han D.K."/>
        </authorList>
    </citation>
    <scope>PHOSPHORYLATION [LARGE SCALE ANALYSIS] AT SER-47; SER-89; SER-105 AND SER-798</scope>
    <scope>PHOSPHORYLATION [LARGE SCALE ANALYSIS] AT SER-489 AND SER-496 (ISOFORMS 2 AND 3)</scope>
    <scope>IDENTIFICATION BY MASS SPECTROMETRY [LARGE SCALE ANALYSIS]</scope>
    <source>
        <tissue>Leukemic T-cell</tissue>
    </source>
</reference>
<reference key="11">
    <citation type="journal article" date="2010" name="Sci. Signal.">
        <title>Quantitative phosphoproteomics reveals widespread full phosphorylation site occupancy during mitosis.</title>
        <authorList>
            <person name="Olsen J.V."/>
            <person name="Vermeulen M."/>
            <person name="Santamaria A."/>
            <person name="Kumar C."/>
            <person name="Miller M.L."/>
            <person name="Jensen L.J."/>
            <person name="Gnad F."/>
            <person name="Cox J."/>
            <person name="Jensen T.S."/>
            <person name="Nigg E.A."/>
            <person name="Brunak S."/>
            <person name="Mann M."/>
        </authorList>
    </citation>
    <scope>IDENTIFICATION BY MASS SPECTROMETRY [LARGE SCALE ANALYSIS]</scope>
    <source>
        <tissue>Cervix carcinoma</tissue>
    </source>
</reference>
<reference key="12">
    <citation type="journal article" date="2011" name="Sci. Signal.">
        <title>System-wide temporal characterization of the proteome and phosphoproteome of human embryonic stem cell differentiation.</title>
        <authorList>
            <person name="Rigbolt K.T."/>
            <person name="Prokhorova T.A."/>
            <person name="Akimov V."/>
            <person name="Henningsen J."/>
            <person name="Johansen P.T."/>
            <person name="Kratchmarova I."/>
            <person name="Kassem M."/>
            <person name="Mann M."/>
            <person name="Olsen J.V."/>
            <person name="Blagoev B."/>
        </authorList>
    </citation>
    <scope>PHOSPHORYLATION [LARGE SCALE ANALYSIS] AT SER-47; SER-78 AND SER-453</scope>
    <scope>IDENTIFICATION BY MASS SPECTROMETRY [LARGE SCALE ANALYSIS]</scope>
</reference>
<reference key="13">
    <citation type="journal article" date="2013" name="J. Proteome Res.">
        <title>Toward a comprehensive characterization of a human cancer cell phosphoproteome.</title>
        <authorList>
            <person name="Zhou H."/>
            <person name="Di Palma S."/>
            <person name="Preisinger C."/>
            <person name="Peng M."/>
            <person name="Polat A.N."/>
            <person name="Heck A.J."/>
            <person name="Mohammed S."/>
        </authorList>
    </citation>
    <scope>PHOSPHORYLATION [LARGE SCALE ANALYSIS] AT SER-35; SER-47; SER-114; SER-146; SER-381; THR-383 AND SER-798</scope>
    <scope>IDENTIFICATION BY MASS SPECTROMETRY [LARGE SCALE ANALYSIS]</scope>
    <source>
        <tissue>Cervix carcinoma</tissue>
        <tissue>Erythroleukemia</tissue>
    </source>
</reference>
<reference key="14">
    <citation type="journal article" date="2013" name="Nature">
        <title>Autophagy promotes primary ciliogenesis by removing OFD1 from centriolar satellites.</title>
        <authorList>
            <person name="Tang Z."/>
            <person name="Lin M.G."/>
            <person name="Stowe T.R."/>
            <person name="Chen S."/>
            <person name="Zhu M."/>
            <person name="Stearns T."/>
            <person name="Franco B."/>
            <person name="Zhong Q."/>
        </authorList>
    </citation>
    <scope>INTERACTION WITH MAP1LC3B</scope>
</reference>
<reference key="15">
    <citation type="journal article" date="2012" name="J. Cell Sci.">
        <title>The centriolar satellite protein Cep131 is important for genome stability.</title>
        <authorList>
            <person name="Staples C.J."/>
            <person name="Myers K.N."/>
            <person name="Beveridge R.D."/>
            <person name="Patil A.A."/>
            <person name="Lee A.J."/>
            <person name="Swanton C."/>
            <person name="Howell M."/>
            <person name="Boulton S.J."/>
            <person name="Collis S.J."/>
        </authorList>
    </citation>
    <scope>FUNCTION IN GENOMIC STABILITY</scope>
    <scope>INTERACTION WITH CEP290; DCTN1; PCM1 AND PCNT</scope>
    <scope>SUBCELLULAR LOCATION</scope>
</reference>
<reference key="16">
    <citation type="journal article" date="2013" name="EMBO J.">
        <title>Cilia born out of shock and stress.</title>
        <authorList>
            <person name="Chavali P.L."/>
            <person name="Gergely F."/>
        </authorList>
    </citation>
    <scope>REVIEW</scope>
    <scope>FUNCTION</scope>
</reference>
<reference key="17">
    <citation type="journal article" date="2013" name="EMBO J.">
        <title>A new cellular stress response that triggers centriolar satellite reorganization and ciliogenesis.</title>
        <authorList>
            <person name="Villumsen B.H."/>
            <person name="Danielsen J.R."/>
            <person name="Povlsen L."/>
            <person name="Sylvestersen K.B."/>
            <person name="Merdes A."/>
            <person name="Beli P."/>
            <person name="Yang Y.G."/>
            <person name="Choudhary C."/>
            <person name="Nielsen M.L."/>
            <person name="Mailand N."/>
            <person name="Bekker-Jensen S."/>
        </authorList>
    </citation>
    <scope>FUNCTION IN CILIOGENESIS</scope>
    <scope>UBIQUITINATION BY MIB1</scope>
    <scope>INTERACTION WITH MIB1 AND PCM1</scope>
    <scope>ASSOCIATION WITH MICROTUBULES</scope>
    <scope>SUBCELLULAR LOCATION</scope>
</reference>
<reference key="18">
    <citation type="journal article" date="2013" name="Gene">
        <title>Regulation of CEP131 gene expression by SP1.</title>
        <authorList>
            <person name="Huong P.T."/>
            <person name="Soung N.K."/>
            <person name="Jang J.H."/>
            <person name="Cha-Molstad H.J."/>
            <person name="Sakchaisri K."/>
            <person name="Kim S.O."/>
            <person name="Jang J.M."/>
            <person name="Kim K.E."/>
            <person name="Lee K.S."/>
            <person name="Kwon Y.T."/>
            <person name="Erikson R.L."/>
            <person name="Ahn J.S."/>
            <person name="Kim B.Y."/>
        </authorList>
    </citation>
    <scope>INDUCTION</scope>
</reference>
<reference key="19">
    <citation type="journal article" date="2014" name="J. Proteomics">
        <title>An enzyme assisted RP-RPLC approach for in-depth analysis of human liver phosphoproteome.</title>
        <authorList>
            <person name="Bian Y."/>
            <person name="Song C."/>
            <person name="Cheng K."/>
            <person name="Dong M."/>
            <person name="Wang F."/>
            <person name="Huang J."/>
            <person name="Sun D."/>
            <person name="Wang L."/>
            <person name="Ye M."/>
            <person name="Zou H."/>
        </authorList>
    </citation>
    <scope>IDENTIFICATION BY MASS SPECTROMETRY [LARGE SCALE ANALYSIS]</scope>
    <source>
        <tissue>Liver</tissue>
    </source>
</reference>
<reference key="20">
    <citation type="journal article" date="2014" name="PLoS Genet.">
        <title>The centriolar satellite protein AZI1 interacts with BBS4 and regulates ciliary trafficking of the BBSome.</title>
        <authorList>
            <person name="Chamling X."/>
            <person name="Seo S."/>
            <person name="Searby C.C."/>
            <person name="Kim G."/>
            <person name="Slusarski D.C."/>
            <person name="Sheffield V.C."/>
        </authorList>
    </citation>
    <scope>FUNCTION IN CILIARY TRAFFICKING</scope>
    <scope>SUBUNIT</scope>
    <scope>INTERACTION WITH BBS4</scope>
    <scope>ASSOCIATION WITH THE BBSOME COMPLEX</scope>
</reference>
<reference key="21">
    <citation type="journal article" date="2015" name="Nat. Commun.">
        <title>p38- and MK2-dependent signalling promotes stress-induced centriolar satellite remodelling via 14-3-3-dependent sequestration of CEP131/AZI1.</title>
        <authorList>
            <person name="Tollenaere M.A."/>
            <person name="Villumsen B.H."/>
            <person name="Blasius M."/>
            <person name="Nielsen J.C."/>
            <person name="Wagner S.A."/>
            <person name="Bartek J."/>
            <person name="Beli P."/>
            <person name="Mailand N."/>
            <person name="Bekker-Jensen S."/>
        </authorList>
    </citation>
    <scope>FUNCTION</scope>
    <scope>INTERACTION WITH 14-3-3</scope>
    <scope>SUBCELLULAR LOCATION</scope>
    <scope>PHOSPHORYLATION AT SER-47; SER-78 AND SER-731</scope>
    <scope>MUTAGENESIS OF SER-47; SER-78 AND SER-731</scope>
</reference>
<reference key="22">
    <citation type="journal article" date="2015" name="Elife">
        <title>Centriolar satellites assemble centrosomal microcephaly proteins to recruit CDK2 and promote centriole duplication.</title>
        <authorList>
            <person name="Kodani A."/>
            <person name="Yu T.W."/>
            <person name="Johnson J.R."/>
            <person name="Jayaraman D."/>
            <person name="Johnson T.L."/>
            <person name="Al-Gazali L."/>
            <person name="Sztriha L."/>
            <person name="Partlow J.N."/>
            <person name="Kim H."/>
            <person name="Krup A.L."/>
            <person name="Dammermann A."/>
            <person name="Krogan N."/>
            <person name="Walsh C.A."/>
            <person name="Reiter J.F."/>
        </authorList>
    </citation>
    <scope>FUNCTION</scope>
    <scope>SUBCELLULAR LOCATION</scope>
    <scope>INTERACTION WITH CEP152 AND PCM1</scope>
</reference>
<reference key="23">
    <citation type="journal article" date="2016" name="PLoS ONE">
        <title>SDCCAG8 interacts with RAB effector proteins RABEP2 and ERC1 and is required for Hedgehog Signaling.</title>
        <authorList>
            <person name="Airik R."/>
            <person name="Schueler M."/>
            <person name="Airik M."/>
            <person name="Cho J."/>
            <person name="Ulanowicz K.A."/>
            <person name="Porath J.D."/>
            <person name="Hurd T.W."/>
            <person name="Bekker-Jensen S."/>
            <person name="Schroeder J.M."/>
            <person name="Andersen J.S."/>
            <person name="Hildebrandt F."/>
        </authorList>
    </citation>
    <scope>SUBCELLULAR LOCATION</scope>
    <scope>INTERACTION WITH SDCCAG8</scope>
</reference>
<reference key="24">
    <citation type="journal article" date="2019" name="J. Biol. Chem.">
        <title>Polo-like kinase 4 maintains centriolar satellite integrity by phosphorylation of centrosomal protein 131 (CEP131).</title>
        <authorList>
            <person name="Denu R.A."/>
            <person name="Sass M.M."/>
            <person name="Johnson J.M."/>
            <person name="Potts G.K."/>
            <person name="Choudhary A."/>
            <person name="Coon J.J."/>
            <person name="Burkard M.E."/>
        </authorList>
    </citation>
    <scope>FUNCTION</scope>
    <scope>SUBCELLULAR LOCATION</scope>
    <scope>PHOSPHORYLATION AT SER-78</scope>
    <scope>MUTAGENESIS OF SER-78</scope>
    <scope>INTERACTION WITH PLK4</scope>
</reference>
<reference key="25">
    <citation type="journal article" date="2019" name="RNA">
        <title>Human nuclear RNAi-defective 2 (NRDE2) is an essential RNA splicing factor.</title>
        <authorList>
            <person name="Jiao A.L."/>
            <person name="Perales R."/>
            <person name="Umbreit N.T."/>
            <person name="Haswell J.R."/>
            <person name="Piper M.E."/>
            <person name="Adams B.D."/>
            <person name="Pellman D."/>
            <person name="Kennedy S."/>
            <person name="Slack F.J."/>
        </authorList>
    </citation>
    <scope>SUBCELLULAR LOCATION</scope>
</reference>
<reference key="26">
    <citation type="journal article" date="2020" name="Biol. Cell">
        <title>hVFL3/CCDC61 is a component of mother centriole subdistal appendages required for centrosome cohesion and positioning.</title>
        <authorList>
            <person name="Pizon V."/>
            <person name="Gaudin N."/>
            <person name="Poteau M."/>
            <person name="Cifuentes-Diaz C."/>
            <person name="Demdou R."/>
            <person name="Heyer V."/>
            <person name="Reina San Martin B."/>
            <person name="Azimzadeh J."/>
        </authorList>
    </citation>
    <scope>INTERACTION WITH CCDC61</scope>
    <scope>SUBCELLULAR LOCATION</scope>
</reference>